<gene>
    <name type="primary">IL6</name>
</gene>
<keyword id="KW-0011">Acute phase</keyword>
<keyword id="KW-0202">Cytokine</keyword>
<keyword id="KW-1015">Disulfide bond</keyword>
<keyword id="KW-0325">Glycoprotein</keyword>
<keyword id="KW-0339">Growth factor</keyword>
<keyword id="KW-1185">Reference proteome</keyword>
<keyword id="KW-0964">Secreted</keyword>
<keyword id="KW-0732">Signal</keyword>
<protein>
    <recommendedName>
        <fullName>Interleukin-6</fullName>
        <shortName>IL-6</shortName>
    </recommendedName>
</protein>
<reference key="1">
    <citation type="journal article" date="2000" name="Cytokine">
        <title>The complete cDNA sequences of IL-2, IL-4, IL-6 and IL-10 from the European rabbit (Oryctolagus cuniculus).</title>
        <authorList>
            <person name="Perkins H.D."/>
            <person name="van Leeuwen B.H."/>
            <person name="Hardy C.M."/>
            <person name="Kerr P.J."/>
        </authorList>
    </citation>
    <scope>NUCLEOTIDE SEQUENCE [MRNA]</scope>
    <source>
        <tissue>Spleen</tissue>
    </source>
</reference>
<reference key="2">
    <citation type="submission" date="2006-06" db="EMBL/GenBank/DDBJ databases">
        <title>Cloning and expression of IL-6 gene of Chinese white rabbit.</title>
        <authorList>
            <person name="Qiao J."/>
            <person name="Meng Q."/>
            <person name="Cai X."/>
        </authorList>
    </citation>
    <scope>NUCLEOTIDE SEQUENCE [MRNA]</scope>
    <source>
        <strain>Chinese white</strain>
    </source>
</reference>
<reference key="3">
    <citation type="submission" date="2006-11" db="EMBL/GenBank/DDBJ databases">
        <title>Cloning and sequence analysis of IL-6 gene of rabbit.</title>
        <authorList>
            <person name="Zhang X.L."/>
            <person name="Wang H.N."/>
            <person name="Huang Y."/>
        </authorList>
    </citation>
    <scope>NUCLEOTIDE SEQUENCE [MRNA]</scope>
</reference>
<dbReference type="EMBL" id="AF169176">
    <property type="protein sequence ID" value="AAF86660.1"/>
    <property type="molecule type" value="mRNA"/>
</dbReference>
<dbReference type="EMBL" id="DQ680161">
    <property type="protein sequence ID" value="ABG73600.1"/>
    <property type="molecule type" value="mRNA"/>
</dbReference>
<dbReference type="EMBL" id="EF126499">
    <property type="protein sequence ID" value="ABL76067.1"/>
    <property type="molecule type" value="mRNA"/>
</dbReference>
<dbReference type="RefSeq" id="NP_001075533.1">
    <property type="nucleotide sequence ID" value="NM_001082064.2"/>
</dbReference>
<dbReference type="SMR" id="Q9MZR1"/>
<dbReference type="FunCoup" id="Q9MZR1">
    <property type="interactions" value="50"/>
</dbReference>
<dbReference type="STRING" id="9986.ENSOCUP00000017266"/>
<dbReference type="GlyCosmos" id="Q9MZR1">
    <property type="glycosylation" value="1 site, No reported glycans"/>
</dbReference>
<dbReference type="PaxDb" id="9986-ENSOCUP00000017266"/>
<dbReference type="Ensembl" id="ENSOCUT00000023601.3">
    <property type="protein sequence ID" value="ENSOCUP00000017266.1"/>
    <property type="gene ID" value="ENSOCUG00000027471.3"/>
</dbReference>
<dbReference type="GeneID" id="100008733"/>
<dbReference type="KEGG" id="ocu:100008733"/>
<dbReference type="CTD" id="3569"/>
<dbReference type="eggNOG" id="ENOG502S7Q4">
    <property type="taxonomic scope" value="Eukaryota"/>
</dbReference>
<dbReference type="GeneTree" id="ENSGT00390000000878"/>
<dbReference type="HOGENOM" id="CLU_096521_0_0_1"/>
<dbReference type="InParanoid" id="Q9MZR1"/>
<dbReference type="OMA" id="CLMRIAT"/>
<dbReference type="OrthoDB" id="8943569at2759"/>
<dbReference type="TreeFam" id="TF335984"/>
<dbReference type="Proteomes" id="UP000001811">
    <property type="component" value="Chromosome 10"/>
</dbReference>
<dbReference type="Bgee" id="ENSOCUG00000027471">
    <property type="expression patterns" value="Expressed in skin of back and 3 other cell types or tissues"/>
</dbReference>
<dbReference type="GO" id="GO:0005615">
    <property type="term" value="C:extracellular space"/>
    <property type="evidence" value="ECO:0007669"/>
    <property type="project" value="UniProtKB-KW"/>
</dbReference>
<dbReference type="GO" id="GO:0005896">
    <property type="term" value="C:interleukin-6 receptor complex"/>
    <property type="evidence" value="ECO:0007669"/>
    <property type="project" value="TreeGrafter"/>
</dbReference>
<dbReference type="GO" id="GO:0005125">
    <property type="term" value="F:cytokine activity"/>
    <property type="evidence" value="ECO:0007669"/>
    <property type="project" value="UniProtKB-KW"/>
</dbReference>
<dbReference type="GO" id="GO:0008083">
    <property type="term" value="F:growth factor activity"/>
    <property type="evidence" value="ECO:0007669"/>
    <property type="project" value="UniProtKB-KW"/>
</dbReference>
<dbReference type="GO" id="GO:0005138">
    <property type="term" value="F:interleukin-6 receptor binding"/>
    <property type="evidence" value="ECO:0007669"/>
    <property type="project" value="InterPro"/>
</dbReference>
<dbReference type="GO" id="GO:0006953">
    <property type="term" value="P:acute-phase response"/>
    <property type="evidence" value="ECO:0007669"/>
    <property type="project" value="UniProtKB-KW"/>
</dbReference>
<dbReference type="GO" id="GO:0042593">
    <property type="term" value="P:glucose homeostasis"/>
    <property type="evidence" value="ECO:0000250"/>
    <property type="project" value="UniProtKB"/>
</dbReference>
<dbReference type="GO" id="GO:0072574">
    <property type="term" value="P:hepatocyte proliferation"/>
    <property type="evidence" value="ECO:0000250"/>
    <property type="project" value="UniProtKB"/>
</dbReference>
<dbReference type="GO" id="GO:0070102">
    <property type="term" value="P:interleukin-6-mediated signaling pathway"/>
    <property type="evidence" value="ECO:0000250"/>
    <property type="project" value="UniProtKB"/>
</dbReference>
<dbReference type="GO" id="GO:0097421">
    <property type="term" value="P:liver regeneration"/>
    <property type="evidence" value="ECO:0000250"/>
    <property type="project" value="UniProtKB"/>
</dbReference>
<dbReference type="GO" id="GO:0051240">
    <property type="term" value="P:positive regulation of multicellular organismal process"/>
    <property type="evidence" value="ECO:0007669"/>
    <property type="project" value="UniProtKB-ARBA"/>
</dbReference>
<dbReference type="GO" id="GO:0046427">
    <property type="term" value="P:positive regulation of receptor signaling pathway via JAK-STAT"/>
    <property type="evidence" value="ECO:0007669"/>
    <property type="project" value="TreeGrafter"/>
</dbReference>
<dbReference type="GO" id="GO:1904894">
    <property type="term" value="P:positive regulation of receptor signaling pathway via STAT"/>
    <property type="evidence" value="ECO:0000250"/>
    <property type="project" value="UniProtKB"/>
</dbReference>
<dbReference type="GO" id="GO:0070092">
    <property type="term" value="P:regulation of glucagon secretion"/>
    <property type="evidence" value="ECO:0000250"/>
    <property type="project" value="UniProtKB"/>
</dbReference>
<dbReference type="GO" id="GO:0050796">
    <property type="term" value="P:regulation of insulin secretion"/>
    <property type="evidence" value="ECO:0000250"/>
    <property type="project" value="UniProtKB"/>
</dbReference>
<dbReference type="GO" id="GO:0014823">
    <property type="term" value="P:response to activity"/>
    <property type="evidence" value="ECO:0000250"/>
    <property type="project" value="UniProtKB"/>
</dbReference>
<dbReference type="GO" id="GO:0072540">
    <property type="term" value="P:T-helper 17 cell lineage commitment"/>
    <property type="evidence" value="ECO:0000250"/>
    <property type="project" value="UniProtKB"/>
</dbReference>
<dbReference type="GO" id="GO:0010573">
    <property type="term" value="P:vascular endothelial growth factor production"/>
    <property type="evidence" value="ECO:0000250"/>
    <property type="project" value="UniProtKB"/>
</dbReference>
<dbReference type="Gene3D" id="1.20.1250.10">
    <property type="match status" value="1"/>
</dbReference>
<dbReference type="InterPro" id="IPR009079">
    <property type="entry name" value="4_helix_cytokine-like_core"/>
</dbReference>
<dbReference type="InterPro" id="IPR003574">
    <property type="entry name" value="IL-6-like"/>
</dbReference>
<dbReference type="InterPro" id="IPR030474">
    <property type="entry name" value="IL-6/GCSF/MGF"/>
</dbReference>
<dbReference type="InterPro" id="IPR030473">
    <property type="entry name" value="IL6/GCSF/MGF_CS"/>
</dbReference>
<dbReference type="PANTHER" id="PTHR48494">
    <property type="entry name" value="INTERLEUKIN-6"/>
    <property type="match status" value="1"/>
</dbReference>
<dbReference type="PANTHER" id="PTHR48494:SF1">
    <property type="entry name" value="INTERLEUKIN-6"/>
    <property type="match status" value="1"/>
</dbReference>
<dbReference type="Pfam" id="PF00489">
    <property type="entry name" value="IL6"/>
    <property type="match status" value="1"/>
</dbReference>
<dbReference type="PIRSF" id="PIRSF001935">
    <property type="entry name" value="IL6_MGF_GCSF"/>
    <property type="match status" value="1"/>
</dbReference>
<dbReference type="PRINTS" id="PR00433">
    <property type="entry name" value="IL6GCSFMGF"/>
</dbReference>
<dbReference type="PRINTS" id="PR00434">
    <property type="entry name" value="INTERLEUKIN6"/>
</dbReference>
<dbReference type="SMART" id="SM00126">
    <property type="entry name" value="IL6"/>
    <property type="match status" value="1"/>
</dbReference>
<dbReference type="SUPFAM" id="SSF47266">
    <property type="entry name" value="4-helical cytokines"/>
    <property type="match status" value="1"/>
</dbReference>
<dbReference type="PROSITE" id="PS00254">
    <property type="entry name" value="INTERLEUKIN_6"/>
    <property type="match status" value="1"/>
</dbReference>
<organism>
    <name type="scientific">Oryctolagus cuniculus</name>
    <name type="common">Rabbit</name>
    <dbReference type="NCBI Taxonomy" id="9986"/>
    <lineage>
        <taxon>Eukaryota</taxon>
        <taxon>Metazoa</taxon>
        <taxon>Chordata</taxon>
        <taxon>Craniata</taxon>
        <taxon>Vertebrata</taxon>
        <taxon>Euteleostomi</taxon>
        <taxon>Mammalia</taxon>
        <taxon>Eutheria</taxon>
        <taxon>Euarchontoglires</taxon>
        <taxon>Glires</taxon>
        <taxon>Lagomorpha</taxon>
        <taxon>Leporidae</taxon>
        <taxon>Oryctolagus</taxon>
    </lineage>
</organism>
<proteinExistence type="evidence at transcript level"/>
<sequence>MNSFTSALRPGPLGCSLALLLVVATAFPTSAPVREDSNTKASPDKTLTPPGRTIESIRSILETIKELRKEMCDHDVNCMNRKEALAEVNLHLPRLIEEDGCFPPAVNNETCLLRITSGLMEFRMYLEHLQAKFRSDEENTRVSMVLKNIQHLIKTLRPKVKNLNEEATLKPAVAVSLMENLQQKNQWLKTTTIHFILRGLTNFLEFTLRAVDLMECGCPCLRNFMGSASHGQNTPSCPLDT</sequence>
<comment type="function">
    <text evidence="2">Cytokine with a wide variety of biological functions in immunity, tissue regeneration, and metabolism. Binds to IL6R, then the complex associates to the signaling subunit IL6ST/gp130 to trigger the intracellular IL6-signaling pathway. The interaction with the membrane-bound IL6R and IL6ST stimulates 'classic signaling', whereas the binding of IL6 and soluble IL6R to IL6ST stimulates 'trans-signaling'. Alternatively, 'cluster signaling' occurs when membrane-bound IL6:IL6R complexes on transmitter cells activate IL6ST receptors on neighboring receiver cells.</text>
</comment>
<comment type="function">
    <text evidence="2 3">IL6 is a potent inducer of the acute phase response. Rapid production of IL6 contributes to host defense during infection and tissue injury, but excessive IL6 synthesis is involved in disease pathology. In the innate immune response, is synthesized by myeloid cells, such as macrophages and dendritic cells, upon recognition of pathogens through toll-like receptors (TLRs) at the site of infection or tissue injury (By similarity). In the adaptive immune response, is required for the differentiation of B cells into immunoglobulin-secreting cells. Plays a major role in the differentiation of CD4(+) T cell subsets. Essential factor for the development of T follicular helper (Tfh) cells that are required for the induction of germinal-center formation. Required to drive naive CD4(+) T cells to the Th17 lineage. Also required for proliferation of myeloma cells and the survival of plasmablast cells (By similarity).</text>
</comment>
<comment type="function">
    <text evidence="2 3">Acts as an essential factor in bone homeostasis and on vessels directly or indirectly by induction of VEGF, resulting in increased angiogenesis activity and vascular permeability. Induces, through 'trans-signaling' and synergistically with IL1B and TNF, the production of VEGF. Involved in metabolic controls, is discharged into the bloodstream after muscle contraction increasing lipolysis and improving insulin resistance (By similarity). 'Trans-signaling' in central nervous system also regulates energy and glucose homeostasis. Mediates, through GLP-1, crosstalk between insulin-sensitive tissues, intestinal L cells and pancreatic islets to adapt to changes in insulin demand (By similarity). Also acts as a myokine (By similarity). Plays a protective role during liver injury, being required for maintenance of tissue regeneration (By similarity). Also has a pivotal role in iron metabolism by regulating HAMP/hepcidin expression upon inflammation or bacterial infection (By similarity). Through activation of IL6ST-YAP-NOTCH pathway, induces inflammation-induced epithelial regeneration (By similarity).</text>
</comment>
<comment type="subunit">
    <text evidence="2">Component of a hexamer of two molecules each of IL6, IL6R and IL6ST; first binds to IL6R to associate with the signaling subunit IL6ST. Interacts with IL6R (via the N-terminal ectodomain); this interaction may be affected by IL6R-binding with SORL1, hence decreasing IL6 cis signaling. Interacts with SORL1 (via the N-terminal ectodomain); this interaction leads to IL6 internalization and lysosomal degradation. May form a trimeric complex with the soluble SORL1 ectodomain and soluble IL6R receptor; this interaction might stabilize circulating IL6, hence promoting IL6 trans signaling.</text>
</comment>
<comment type="subcellular location">
    <subcellularLocation>
        <location evidence="2">Secreted</location>
    </subcellularLocation>
</comment>
<comment type="similarity">
    <text evidence="6">Belongs to the IL-6 superfamily.</text>
</comment>
<evidence type="ECO:0000250" key="1"/>
<evidence type="ECO:0000250" key="2">
    <source>
        <dbReference type="UniProtKB" id="P05231"/>
    </source>
</evidence>
<evidence type="ECO:0000250" key="3">
    <source>
        <dbReference type="UniProtKB" id="P08505"/>
    </source>
</evidence>
<evidence type="ECO:0000255" key="4"/>
<evidence type="ECO:0000256" key="5">
    <source>
        <dbReference type="SAM" id="MobiDB-lite"/>
    </source>
</evidence>
<evidence type="ECO:0000305" key="6"/>
<name>IL6_RABIT</name>
<feature type="signal peptide" evidence="4">
    <location>
        <begin position="1"/>
        <end position="26"/>
    </location>
</feature>
<feature type="chain" id="PRO_0000015592" description="Interleukin-6">
    <location>
        <begin position="27"/>
        <end position="241"/>
    </location>
</feature>
<feature type="region of interest" description="Disordered" evidence="5">
    <location>
        <begin position="32"/>
        <end position="51"/>
    </location>
</feature>
<feature type="glycosylation site" description="N-linked (GlcNAc...) asparagine" evidence="4">
    <location>
        <position position="108"/>
    </location>
</feature>
<feature type="disulfide bond" evidence="1">
    <location>
        <begin position="72"/>
        <end position="78"/>
    </location>
</feature>
<feature type="disulfide bond" evidence="1">
    <location>
        <begin position="101"/>
        <end position="111"/>
    </location>
</feature>
<accession>Q9MZR1</accession>
<accession>Q0PW36</accession>